<accession>O31818</accession>
<sequence>MISNAKIARINELAAKAKAGVITEEEKAEQQKLRQEYLKGFRSSMKNTLKSVKIIDPEGNDVTPEKLKREQRNNKLH</sequence>
<protein>
    <recommendedName>
        <fullName evidence="1">UPF0291 protein YnzC</fullName>
    </recommendedName>
</protein>
<comment type="subcellular location">
    <subcellularLocation>
        <location evidence="1">Cytoplasm</location>
    </subcellularLocation>
</comment>
<comment type="induction">
    <text evidence="3">Repressed by LexA.</text>
</comment>
<comment type="similarity">
    <text evidence="1">Belongs to the UPF0291 family.</text>
</comment>
<evidence type="ECO:0000255" key="1">
    <source>
        <dbReference type="HAMAP-Rule" id="MF_01103"/>
    </source>
</evidence>
<evidence type="ECO:0000256" key="2">
    <source>
        <dbReference type="SAM" id="MobiDB-lite"/>
    </source>
</evidence>
<evidence type="ECO:0000269" key="3">
    <source>
    </source>
</evidence>
<evidence type="ECO:0007829" key="4">
    <source>
        <dbReference type="PDB" id="3BHP"/>
    </source>
</evidence>
<gene>
    <name type="primary">ynzC</name>
    <name type="ordered locus">BSU17880</name>
</gene>
<keyword id="KW-0002">3D-structure</keyword>
<keyword id="KW-0963">Cytoplasm</keyword>
<keyword id="KW-1185">Reference proteome</keyword>
<organism>
    <name type="scientific">Bacillus subtilis (strain 168)</name>
    <dbReference type="NCBI Taxonomy" id="224308"/>
    <lineage>
        <taxon>Bacteria</taxon>
        <taxon>Bacillati</taxon>
        <taxon>Bacillota</taxon>
        <taxon>Bacilli</taxon>
        <taxon>Bacillales</taxon>
        <taxon>Bacillaceae</taxon>
        <taxon>Bacillus</taxon>
    </lineage>
</organism>
<reference key="1">
    <citation type="journal article" date="1997" name="Nature">
        <title>The complete genome sequence of the Gram-positive bacterium Bacillus subtilis.</title>
        <authorList>
            <person name="Kunst F."/>
            <person name="Ogasawara N."/>
            <person name="Moszer I."/>
            <person name="Albertini A.M."/>
            <person name="Alloni G."/>
            <person name="Azevedo V."/>
            <person name="Bertero M.G."/>
            <person name="Bessieres P."/>
            <person name="Bolotin A."/>
            <person name="Borchert S."/>
            <person name="Borriss R."/>
            <person name="Boursier L."/>
            <person name="Brans A."/>
            <person name="Braun M."/>
            <person name="Brignell S.C."/>
            <person name="Bron S."/>
            <person name="Brouillet S."/>
            <person name="Bruschi C.V."/>
            <person name="Caldwell B."/>
            <person name="Capuano V."/>
            <person name="Carter N.M."/>
            <person name="Choi S.-K."/>
            <person name="Codani J.-J."/>
            <person name="Connerton I.F."/>
            <person name="Cummings N.J."/>
            <person name="Daniel R.A."/>
            <person name="Denizot F."/>
            <person name="Devine K.M."/>
            <person name="Duesterhoeft A."/>
            <person name="Ehrlich S.D."/>
            <person name="Emmerson P.T."/>
            <person name="Entian K.-D."/>
            <person name="Errington J."/>
            <person name="Fabret C."/>
            <person name="Ferrari E."/>
            <person name="Foulger D."/>
            <person name="Fritz C."/>
            <person name="Fujita M."/>
            <person name="Fujita Y."/>
            <person name="Fuma S."/>
            <person name="Galizzi A."/>
            <person name="Galleron N."/>
            <person name="Ghim S.-Y."/>
            <person name="Glaser P."/>
            <person name="Goffeau A."/>
            <person name="Golightly E.J."/>
            <person name="Grandi G."/>
            <person name="Guiseppi G."/>
            <person name="Guy B.J."/>
            <person name="Haga K."/>
            <person name="Haiech J."/>
            <person name="Harwood C.R."/>
            <person name="Henaut A."/>
            <person name="Hilbert H."/>
            <person name="Holsappel S."/>
            <person name="Hosono S."/>
            <person name="Hullo M.-F."/>
            <person name="Itaya M."/>
            <person name="Jones L.-M."/>
            <person name="Joris B."/>
            <person name="Karamata D."/>
            <person name="Kasahara Y."/>
            <person name="Klaerr-Blanchard M."/>
            <person name="Klein C."/>
            <person name="Kobayashi Y."/>
            <person name="Koetter P."/>
            <person name="Koningstein G."/>
            <person name="Krogh S."/>
            <person name="Kumano M."/>
            <person name="Kurita K."/>
            <person name="Lapidus A."/>
            <person name="Lardinois S."/>
            <person name="Lauber J."/>
            <person name="Lazarevic V."/>
            <person name="Lee S.-M."/>
            <person name="Levine A."/>
            <person name="Liu H."/>
            <person name="Masuda S."/>
            <person name="Mauel C."/>
            <person name="Medigue C."/>
            <person name="Medina N."/>
            <person name="Mellado R.P."/>
            <person name="Mizuno M."/>
            <person name="Moestl D."/>
            <person name="Nakai S."/>
            <person name="Noback M."/>
            <person name="Noone D."/>
            <person name="O'Reilly M."/>
            <person name="Ogawa K."/>
            <person name="Ogiwara A."/>
            <person name="Oudega B."/>
            <person name="Park S.-H."/>
            <person name="Parro V."/>
            <person name="Pohl T.M."/>
            <person name="Portetelle D."/>
            <person name="Porwollik S."/>
            <person name="Prescott A.M."/>
            <person name="Presecan E."/>
            <person name="Pujic P."/>
            <person name="Purnelle B."/>
            <person name="Rapoport G."/>
            <person name="Rey M."/>
            <person name="Reynolds S."/>
            <person name="Rieger M."/>
            <person name="Rivolta C."/>
            <person name="Rocha E."/>
            <person name="Roche B."/>
            <person name="Rose M."/>
            <person name="Sadaie Y."/>
            <person name="Sato T."/>
            <person name="Scanlan E."/>
            <person name="Schleich S."/>
            <person name="Schroeter R."/>
            <person name="Scoffone F."/>
            <person name="Sekiguchi J."/>
            <person name="Sekowska A."/>
            <person name="Seror S.J."/>
            <person name="Serror P."/>
            <person name="Shin B.-S."/>
            <person name="Soldo B."/>
            <person name="Sorokin A."/>
            <person name="Tacconi E."/>
            <person name="Takagi T."/>
            <person name="Takahashi H."/>
            <person name="Takemaru K."/>
            <person name="Takeuchi M."/>
            <person name="Tamakoshi A."/>
            <person name="Tanaka T."/>
            <person name="Terpstra P."/>
            <person name="Tognoni A."/>
            <person name="Tosato V."/>
            <person name="Uchiyama S."/>
            <person name="Vandenbol M."/>
            <person name="Vannier F."/>
            <person name="Vassarotti A."/>
            <person name="Viari A."/>
            <person name="Wambutt R."/>
            <person name="Wedler E."/>
            <person name="Wedler H."/>
            <person name="Weitzenegger T."/>
            <person name="Winters P."/>
            <person name="Wipat A."/>
            <person name="Yamamoto H."/>
            <person name="Yamane K."/>
            <person name="Yasumoto K."/>
            <person name="Yata K."/>
            <person name="Yoshida K."/>
            <person name="Yoshikawa H.-F."/>
            <person name="Zumstein E."/>
            <person name="Yoshikawa H."/>
            <person name="Danchin A."/>
        </authorList>
    </citation>
    <scope>NUCLEOTIDE SEQUENCE [LARGE SCALE GENOMIC DNA]</scope>
    <source>
        <strain>168</strain>
    </source>
</reference>
<reference key="2">
    <citation type="journal article" date="2003" name="Mol. Microbiol.">
        <title>Identification of a protein, YneA, responsible for cell division suppression during the SOS response in Bacillus subtilis.</title>
        <authorList>
            <person name="Kawai Y."/>
            <person name="Moriya S."/>
            <person name="Ogasawara N."/>
        </authorList>
    </citation>
    <scope>INDUCTION</scope>
    <source>
        <strain>168</strain>
    </source>
</reference>
<name>YNZC_BACSU</name>
<dbReference type="EMBL" id="AL009126">
    <property type="protein sequence ID" value="CAB13672.1"/>
    <property type="molecule type" value="Genomic_DNA"/>
</dbReference>
<dbReference type="PIR" id="E69894">
    <property type="entry name" value="E69894"/>
</dbReference>
<dbReference type="RefSeq" id="NP_389671.1">
    <property type="nucleotide sequence ID" value="NC_000964.3"/>
</dbReference>
<dbReference type="RefSeq" id="WP_003231595.1">
    <property type="nucleotide sequence ID" value="NZ_OZ025638.1"/>
</dbReference>
<dbReference type="PDB" id="2HEP">
    <property type="method" value="NMR"/>
    <property type="chains" value="A=1-77"/>
</dbReference>
<dbReference type="PDB" id="2JVD">
    <property type="method" value="NMR"/>
    <property type="chains" value="A=1-46"/>
</dbReference>
<dbReference type="PDB" id="3BHP">
    <property type="method" value="X-ray"/>
    <property type="resolution" value="2.01 A"/>
    <property type="chains" value="A/B/C=1-52"/>
</dbReference>
<dbReference type="PDBsum" id="2HEP"/>
<dbReference type="PDBsum" id="2JVD"/>
<dbReference type="PDBsum" id="3BHP"/>
<dbReference type="BMRB" id="O31818"/>
<dbReference type="SMR" id="O31818"/>
<dbReference type="FunCoup" id="O31818">
    <property type="interactions" value="26"/>
</dbReference>
<dbReference type="STRING" id="224308.BSU17880"/>
<dbReference type="PaxDb" id="224308-BSU17880"/>
<dbReference type="EnsemblBacteria" id="CAB13672">
    <property type="protein sequence ID" value="CAB13672"/>
    <property type="gene ID" value="BSU_17880"/>
</dbReference>
<dbReference type="GeneID" id="939578"/>
<dbReference type="KEGG" id="bsu:BSU17880"/>
<dbReference type="PATRIC" id="fig|224308.179.peg.1949"/>
<dbReference type="eggNOG" id="COG4224">
    <property type="taxonomic scope" value="Bacteria"/>
</dbReference>
<dbReference type="InParanoid" id="O31818"/>
<dbReference type="OrthoDB" id="390105at2"/>
<dbReference type="PhylomeDB" id="O31818"/>
<dbReference type="BioCyc" id="BSUB:BSU17880-MONOMER"/>
<dbReference type="EvolutionaryTrace" id="O31818"/>
<dbReference type="Proteomes" id="UP000001570">
    <property type="component" value="Chromosome"/>
</dbReference>
<dbReference type="GO" id="GO:0005737">
    <property type="term" value="C:cytoplasm"/>
    <property type="evidence" value="ECO:0007669"/>
    <property type="project" value="UniProtKB-SubCell"/>
</dbReference>
<dbReference type="DisProt" id="DP00892"/>
<dbReference type="Gene3D" id="1.10.287.540">
    <property type="entry name" value="Helix hairpin bin"/>
    <property type="match status" value="1"/>
</dbReference>
<dbReference type="HAMAP" id="MF_01103">
    <property type="entry name" value="UPF0291"/>
    <property type="match status" value="1"/>
</dbReference>
<dbReference type="InterPro" id="IPR009242">
    <property type="entry name" value="DUF896"/>
</dbReference>
<dbReference type="PANTHER" id="PTHR37300">
    <property type="entry name" value="UPF0291 PROTEIN CBO2609/CLC_2481"/>
    <property type="match status" value="1"/>
</dbReference>
<dbReference type="PANTHER" id="PTHR37300:SF1">
    <property type="entry name" value="UPF0291 PROTEIN YNZC"/>
    <property type="match status" value="1"/>
</dbReference>
<dbReference type="Pfam" id="PF05979">
    <property type="entry name" value="DUF896"/>
    <property type="match status" value="1"/>
</dbReference>
<dbReference type="SUPFAM" id="SSF158221">
    <property type="entry name" value="YnzC-like"/>
    <property type="match status" value="1"/>
</dbReference>
<feature type="chain" id="PRO_0000094965" description="UPF0291 protein YnzC">
    <location>
        <begin position="1"/>
        <end position="77"/>
    </location>
</feature>
<feature type="region of interest" description="Disordered" evidence="2">
    <location>
        <begin position="56"/>
        <end position="77"/>
    </location>
</feature>
<feature type="compositionally biased region" description="Basic and acidic residues" evidence="2">
    <location>
        <begin position="63"/>
        <end position="77"/>
    </location>
</feature>
<feature type="helix" evidence="4">
    <location>
        <begin position="4"/>
        <end position="18"/>
    </location>
</feature>
<feature type="helix" evidence="4">
    <location>
        <begin position="24"/>
        <end position="48"/>
    </location>
</feature>
<proteinExistence type="evidence at protein level"/>